<organism>
    <name type="scientific">Geotalea uraniireducens (strain Rf4)</name>
    <name type="common">Geobacter uraniireducens</name>
    <dbReference type="NCBI Taxonomy" id="351605"/>
    <lineage>
        <taxon>Bacteria</taxon>
        <taxon>Pseudomonadati</taxon>
        <taxon>Thermodesulfobacteriota</taxon>
        <taxon>Desulfuromonadia</taxon>
        <taxon>Geobacterales</taxon>
        <taxon>Geobacteraceae</taxon>
        <taxon>Geotalea</taxon>
    </lineage>
</organism>
<keyword id="KW-0227">DNA damage</keyword>
<keyword id="KW-0234">DNA repair</keyword>
<keyword id="KW-1185">Reference proteome</keyword>
<sequence>MATRIKILPENLTNKIAAGEVVERPASVVKELVENALDAGCSEVVVEIEAGGRRLIKVTDSGCGMTREDALLALERHATSKIASDSDLFGLATLGFRGEALPSIASVSRFALATREKGAIEGTEIYAEGGRVKEVKVCGMAEGTVISVRNLFFNTPARLKFMKSSDTEAGHVGDLLTKLAISRPDVRFIYNNDGRTIFRALDADLRERVATLLGRALSADLYPLDFHDGPLGVTGLIAKPECSRSAASHLYTYINGRFIKDKVVQHAVLQAYRNFMERGRYPVVVLFITVPADEVDVNVHPTKHEVRFREQGRVHDAIQAALESVLRATPWVRKQAAPQPFASPPPASEASATRVAEVRETLARYSPEKHLQQSFTVPPAATFQRQQGAVSLPVAAREDDTASDKTESKGYYCSLSVIGQFNAAYILCQDGTDLVIIDQHAAHERVAFEKLKAQFAAAQVESQRLLFPETIELSFKEGATLREHLAELGRLGFSLEEFGGATWLLNAVPRLLSGTDYLRTLRDILEELQTLGRSRTFADALEEILSRIACHSVVRGIHPLNGQEISALFAQMDATEFSSNCPHGRPVLRSLTLPEIERMFKR</sequence>
<feature type="chain" id="PRO_1000076698" description="DNA mismatch repair protein MutL">
    <location>
        <begin position="1"/>
        <end position="602"/>
    </location>
</feature>
<name>MUTL_GEOUR</name>
<evidence type="ECO:0000255" key="1">
    <source>
        <dbReference type="HAMAP-Rule" id="MF_00149"/>
    </source>
</evidence>
<comment type="function">
    <text evidence="1">This protein is involved in the repair of mismatches in DNA. It is required for dam-dependent methyl-directed DNA mismatch repair. May act as a 'molecular matchmaker', a protein that promotes the formation of a stable complex between two or more DNA-binding proteins in an ATP-dependent manner without itself being part of a final effector complex.</text>
</comment>
<comment type="similarity">
    <text evidence="1">Belongs to the DNA mismatch repair MutL/HexB family.</text>
</comment>
<gene>
    <name evidence="1" type="primary">mutL</name>
    <name type="ordered locus">Gura_1770</name>
</gene>
<protein>
    <recommendedName>
        <fullName evidence="1">DNA mismatch repair protein MutL</fullName>
    </recommendedName>
</protein>
<reference key="1">
    <citation type="submission" date="2007-05" db="EMBL/GenBank/DDBJ databases">
        <title>Complete sequence of Geobacter uraniireducens Rf4.</title>
        <authorList>
            <consortium name="US DOE Joint Genome Institute"/>
            <person name="Copeland A."/>
            <person name="Lucas S."/>
            <person name="Lapidus A."/>
            <person name="Barry K."/>
            <person name="Detter J.C."/>
            <person name="Glavina del Rio T."/>
            <person name="Hammon N."/>
            <person name="Israni S."/>
            <person name="Dalin E."/>
            <person name="Tice H."/>
            <person name="Pitluck S."/>
            <person name="Chertkov O."/>
            <person name="Brettin T."/>
            <person name="Bruce D."/>
            <person name="Han C."/>
            <person name="Schmutz J."/>
            <person name="Larimer F."/>
            <person name="Land M."/>
            <person name="Hauser L."/>
            <person name="Kyrpides N."/>
            <person name="Mikhailova N."/>
            <person name="Shelobolina E."/>
            <person name="Aklujkar M."/>
            <person name="Lovley D."/>
            <person name="Richardson P."/>
        </authorList>
    </citation>
    <scope>NUCLEOTIDE SEQUENCE [LARGE SCALE GENOMIC DNA]</scope>
    <source>
        <strain>ATCC BAA-1134 / JCM 13001 / Rf4</strain>
    </source>
</reference>
<proteinExistence type="inferred from homology"/>
<accession>A5GEV5</accession>
<dbReference type="EMBL" id="CP000698">
    <property type="protein sequence ID" value="ABQ25960.1"/>
    <property type="molecule type" value="Genomic_DNA"/>
</dbReference>
<dbReference type="RefSeq" id="WP_011938666.1">
    <property type="nucleotide sequence ID" value="NC_009483.1"/>
</dbReference>
<dbReference type="SMR" id="A5GEV5"/>
<dbReference type="STRING" id="351605.Gura_1770"/>
<dbReference type="KEGG" id="gur:Gura_1770"/>
<dbReference type="HOGENOM" id="CLU_004131_4_2_7"/>
<dbReference type="OrthoDB" id="9763467at2"/>
<dbReference type="Proteomes" id="UP000006695">
    <property type="component" value="Chromosome"/>
</dbReference>
<dbReference type="GO" id="GO:0032300">
    <property type="term" value="C:mismatch repair complex"/>
    <property type="evidence" value="ECO:0007669"/>
    <property type="project" value="InterPro"/>
</dbReference>
<dbReference type="GO" id="GO:0005524">
    <property type="term" value="F:ATP binding"/>
    <property type="evidence" value="ECO:0007669"/>
    <property type="project" value="InterPro"/>
</dbReference>
<dbReference type="GO" id="GO:0016887">
    <property type="term" value="F:ATP hydrolysis activity"/>
    <property type="evidence" value="ECO:0007669"/>
    <property type="project" value="InterPro"/>
</dbReference>
<dbReference type="GO" id="GO:0140664">
    <property type="term" value="F:ATP-dependent DNA damage sensor activity"/>
    <property type="evidence" value="ECO:0007669"/>
    <property type="project" value="InterPro"/>
</dbReference>
<dbReference type="GO" id="GO:0030983">
    <property type="term" value="F:mismatched DNA binding"/>
    <property type="evidence" value="ECO:0007669"/>
    <property type="project" value="InterPro"/>
</dbReference>
<dbReference type="GO" id="GO:0006298">
    <property type="term" value="P:mismatch repair"/>
    <property type="evidence" value="ECO:0007669"/>
    <property type="project" value="UniProtKB-UniRule"/>
</dbReference>
<dbReference type="CDD" id="cd16926">
    <property type="entry name" value="HATPase_MutL-MLH-PMS-like"/>
    <property type="match status" value="1"/>
</dbReference>
<dbReference type="CDD" id="cd00782">
    <property type="entry name" value="MutL_Trans"/>
    <property type="match status" value="1"/>
</dbReference>
<dbReference type="FunFam" id="3.30.565.10:FF:000003">
    <property type="entry name" value="DNA mismatch repair endonuclease MutL"/>
    <property type="match status" value="1"/>
</dbReference>
<dbReference type="Gene3D" id="3.30.230.10">
    <property type="match status" value="1"/>
</dbReference>
<dbReference type="Gene3D" id="3.30.565.10">
    <property type="entry name" value="Histidine kinase-like ATPase, C-terminal domain"/>
    <property type="match status" value="1"/>
</dbReference>
<dbReference type="Gene3D" id="3.30.1540.20">
    <property type="entry name" value="MutL, C-terminal domain, dimerisation subdomain"/>
    <property type="match status" value="1"/>
</dbReference>
<dbReference type="Gene3D" id="3.30.1370.100">
    <property type="entry name" value="MutL, C-terminal domain, regulatory subdomain"/>
    <property type="match status" value="1"/>
</dbReference>
<dbReference type="HAMAP" id="MF_00149">
    <property type="entry name" value="DNA_mis_repair"/>
    <property type="match status" value="1"/>
</dbReference>
<dbReference type="InterPro" id="IPR014762">
    <property type="entry name" value="DNA_mismatch_repair_CS"/>
</dbReference>
<dbReference type="InterPro" id="IPR020667">
    <property type="entry name" value="DNA_mismatch_repair_MutL"/>
</dbReference>
<dbReference type="InterPro" id="IPR013507">
    <property type="entry name" value="DNA_mismatch_S5_2-like"/>
</dbReference>
<dbReference type="InterPro" id="IPR036890">
    <property type="entry name" value="HATPase_C_sf"/>
</dbReference>
<dbReference type="InterPro" id="IPR002099">
    <property type="entry name" value="MutL/Mlh/PMS"/>
</dbReference>
<dbReference type="InterPro" id="IPR038973">
    <property type="entry name" value="MutL/Mlh/Pms-like"/>
</dbReference>
<dbReference type="InterPro" id="IPR014790">
    <property type="entry name" value="MutL_C"/>
</dbReference>
<dbReference type="InterPro" id="IPR042120">
    <property type="entry name" value="MutL_C_dimsub"/>
</dbReference>
<dbReference type="InterPro" id="IPR042121">
    <property type="entry name" value="MutL_C_regsub"/>
</dbReference>
<dbReference type="InterPro" id="IPR037198">
    <property type="entry name" value="MutL_C_sf"/>
</dbReference>
<dbReference type="InterPro" id="IPR020568">
    <property type="entry name" value="Ribosomal_Su5_D2-typ_SF"/>
</dbReference>
<dbReference type="InterPro" id="IPR014721">
    <property type="entry name" value="Ribsml_uS5_D2-typ_fold_subgr"/>
</dbReference>
<dbReference type="NCBIfam" id="TIGR00585">
    <property type="entry name" value="mutl"/>
    <property type="match status" value="1"/>
</dbReference>
<dbReference type="PANTHER" id="PTHR10073">
    <property type="entry name" value="DNA MISMATCH REPAIR PROTEIN MLH, PMS, MUTL"/>
    <property type="match status" value="1"/>
</dbReference>
<dbReference type="PANTHER" id="PTHR10073:SF12">
    <property type="entry name" value="DNA MISMATCH REPAIR PROTEIN MLH1"/>
    <property type="match status" value="1"/>
</dbReference>
<dbReference type="Pfam" id="PF01119">
    <property type="entry name" value="DNA_mis_repair"/>
    <property type="match status" value="1"/>
</dbReference>
<dbReference type="Pfam" id="PF02518">
    <property type="entry name" value="HATPase_c"/>
    <property type="match status" value="1"/>
</dbReference>
<dbReference type="Pfam" id="PF08676">
    <property type="entry name" value="MutL_C"/>
    <property type="match status" value="1"/>
</dbReference>
<dbReference type="SMART" id="SM01340">
    <property type="entry name" value="DNA_mis_repair"/>
    <property type="match status" value="1"/>
</dbReference>
<dbReference type="SMART" id="SM00853">
    <property type="entry name" value="MutL_C"/>
    <property type="match status" value="1"/>
</dbReference>
<dbReference type="SUPFAM" id="SSF55874">
    <property type="entry name" value="ATPase domain of HSP90 chaperone/DNA topoisomerase II/histidine kinase"/>
    <property type="match status" value="1"/>
</dbReference>
<dbReference type="SUPFAM" id="SSF118116">
    <property type="entry name" value="DNA mismatch repair protein MutL"/>
    <property type="match status" value="1"/>
</dbReference>
<dbReference type="SUPFAM" id="SSF54211">
    <property type="entry name" value="Ribosomal protein S5 domain 2-like"/>
    <property type="match status" value="1"/>
</dbReference>
<dbReference type="PROSITE" id="PS00058">
    <property type="entry name" value="DNA_MISMATCH_REPAIR_1"/>
    <property type="match status" value="1"/>
</dbReference>